<comment type="function">
    <text evidence="1">The glycine cleavage system catalyzes the degradation of glycine.</text>
</comment>
<comment type="catalytic activity">
    <reaction evidence="1">
        <text>N(6)-[(R)-S(8)-aminomethyldihydrolipoyl]-L-lysyl-[protein] + (6S)-5,6,7,8-tetrahydrofolate = N(6)-[(R)-dihydrolipoyl]-L-lysyl-[protein] + (6R)-5,10-methylene-5,6,7,8-tetrahydrofolate + NH4(+)</text>
        <dbReference type="Rhea" id="RHEA:16945"/>
        <dbReference type="Rhea" id="RHEA-COMP:10475"/>
        <dbReference type="Rhea" id="RHEA-COMP:10492"/>
        <dbReference type="ChEBI" id="CHEBI:15636"/>
        <dbReference type="ChEBI" id="CHEBI:28938"/>
        <dbReference type="ChEBI" id="CHEBI:57453"/>
        <dbReference type="ChEBI" id="CHEBI:83100"/>
        <dbReference type="ChEBI" id="CHEBI:83143"/>
        <dbReference type="EC" id="2.1.2.10"/>
    </reaction>
</comment>
<comment type="subunit">
    <text evidence="1">The glycine cleavage system is composed of four proteins: P, T, L and H.</text>
</comment>
<comment type="similarity">
    <text evidence="1">Belongs to the GcvT family.</text>
</comment>
<dbReference type="EC" id="2.1.2.10" evidence="1"/>
<dbReference type="EMBL" id="BA000002">
    <property type="protein sequence ID" value="BAA80696.2"/>
    <property type="molecule type" value="Genomic_DNA"/>
</dbReference>
<dbReference type="PIR" id="C72551">
    <property type="entry name" value="C72551"/>
</dbReference>
<dbReference type="RefSeq" id="WP_010866535.1">
    <property type="nucleotide sequence ID" value="NC_000854.2"/>
</dbReference>
<dbReference type="SMR" id="Q9YBA2"/>
<dbReference type="STRING" id="272557.APE_1695.1"/>
<dbReference type="EnsemblBacteria" id="BAA80696">
    <property type="protein sequence ID" value="BAA80696"/>
    <property type="gene ID" value="APE_1695.1"/>
</dbReference>
<dbReference type="GeneID" id="1446178"/>
<dbReference type="KEGG" id="ape:APE_1695.1"/>
<dbReference type="PATRIC" id="fig|272557.25.peg.1139"/>
<dbReference type="eggNOG" id="arCOG00756">
    <property type="taxonomic scope" value="Archaea"/>
</dbReference>
<dbReference type="Proteomes" id="UP000002518">
    <property type="component" value="Chromosome"/>
</dbReference>
<dbReference type="GO" id="GO:0005960">
    <property type="term" value="C:glycine cleavage complex"/>
    <property type="evidence" value="ECO:0007669"/>
    <property type="project" value="InterPro"/>
</dbReference>
<dbReference type="GO" id="GO:0004047">
    <property type="term" value="F:aminomethyltransferase activity"/>
    <property type="evidence" value="ECO:0007669"/>
    <property type="project" value="UniProtKB-UniRule"/>
</dbReference>
<dbReference type="GO" id="GO:0008483">
    <property type="term" value="F:transaminase activity"/>
    <property type="evidence" value="ECO:0007669"/>
    <property type="project" value="UniProtKB-KW"/>
</dbReference>
<dbReference type="GO" id="GO:0019464">
    <property type="term" value="P:glycine decarboxylation via glycine cleavage system"/>
    <property type="evidence" value="ECO:0007669"/>
    <property type="project" value="UniProtKB-UniRule"/>
</dbReference>
<dbReference type="Gene3D" id="3.30.1360.120">
    <property type="entry name" value="Probable tRNA modification gtpase trme, domain 1"/>
    <property type="match status" value="1"/>
</dbReference>
<dbReference type="HAMAP" id="MF_00259">
    <property type="entry name" value="GcvT"/>
    <property type="match status" value="1"/>
</dbReference>
<dbReference type="InterPro" id="IPR006223">
    <property type="entry name" value="GCS_T"/>
</dbReference>
<dbReference type="InterPro" id="IPR022903">
    <property type="entry name" value="GCS_T_bac"/>
</dbReference>
<dbReference type="InterPro" id="IPR013977">
    <property type="entry name" value="GCST_C"/>
</dbReference>
<dbReference type="InterPro" id="IPR006222">
    <property type="entry name" value="GCV_T_N"/>
</dbReference>
<dbReference type="InterPro" id="IPR028896">
    <property type="entry name" value="GcvT/YgfZ/DmdA"/>
</dbReference>
<dbReference type="InterPro" id="IPR029043">
    <property type="entry name" value="GcvT/YgfZ_C"/>
</dbReference>
<dbReference type="InterPro" id="IPR027266">
    <property type="entry name" value="TrmE/GcvT_dom1"/>
</dbReference>
<dbReference type="NCBIfam" id="TIGR00528">
    <property type="entry name" value="gcvT"/>
    <property type="match status" value="1"/>
</dbReference>
<dbReference type="NCBIfam" id="NF001567">
    <property type="entry name" value="PRK00389.1"/>
    <property type="match status" value="1"/>
</dbReference>
<dbReference type="PANTHER" id="PTHR43757">
    <property type="entry name" value="AMINOMETHYLTRANSFERASE"/>
    <property type="match status" value="1"/>
</dbReference>
<dbReference type="PANTHER" id="PTHR43757:SF2">
    <property type="entry name" value="AMINOMETHYLTRANSFERASE, MITOCHONDRIAL"/>
    <property type="match status" value="1"/>
</dbReference>
<dbReference type="Pfam" id="PF01571">
    <property type="entry name" value="GCV_T"/>
    <property type="match status" value="1"/>
</dbReference>
<dbReference type="Pfam" id="PF08669">
    <property type="entry name" value="GCV_T_C"/>
    <property type="match status" value="1"/>
</dbReference>
<dbReference type="PIRSF" id="PIRSF006487">
    <property type="entry name" value="GcvT"/>
    <property type="match status" value="1"/>
</dbReference>
<dbReference type="SUPFAM" id="SSF101790">
    <property type="entry name" value="Aminomethyltransferase beta-barrel domain"/>
    <property type="match status" value="1"/>
</dbReference>
<dbReference type="SUPFAM" id="SSF103025">
    <property type="entry name" value="Folate-binding domain"/>
    <property type="match status" value="1"/>
</dbReference>
<evidence type="ECO:0000255" key="1">
    <source>
        <dbReference type="HAMAP-Rule" id="MF_00259"/>
    </source>
</evidence>
<keyword id="KW-0032">Aminotransferase</keyword>
<keyword id="KW-1185">Reference proteome</keyword>
<keyword id="KW-0808">Transferase</keyword>
<organism>
    <name type="scientific">Aeropyrum pernix (strain ATCC 700893 / DSM 11879 / JCM 9820 / NBRC 100138 / K1)</name>
    <dbReference type="NCBI Taxonomy" id="272557"/>
    <lineage>
        <taxon>Archaea</taxon>
        <taxon>Thermoproteota</taxon>
        <taxon>Thermoprotei</taxon>
        <taxon>Desulfurococcales</taxon>
        <taxon>Desulfurococcaceae</taxon>
        <taxon>Aeropyrum</taxon>
    </lineage>
</organism>
<reference key="1">
    <citation type="journal article" date="1999" name="DNA Res.">
        <title>Complete genome sequence of an aerobic hyper-thermophilic crenarchaeon, Aeropyrum pernix K1.</title>
        <authorList>
            <person name="Kawarabayasi Y."/>
            <person name="Hino Y."/>
            <person name="Horikawa H."/>
            <person name="Yamazaki S."/>
            <person name="Haikawa Y."/>
            <person name="Jin-no K."/>
            <person name="Takahashi M."/>
            <person name="Sekine M."/>
            <person name="Baba S."/>
            <person name="Ankai A."/>
            <person name="Kosugi H."/>
            <person name="Hosoyama A."/>
            <person name="Fukui S."/>
            <person name="Nagai Y."/>
            <person name="Nishijima K."/>
            <person name="Nakazawa H."/>
            <person name="Takamiya M."/>
            <person name="Masuda S."/>
            <person name="Funahashi T."/>
            <person name="Tanaka T."/>
            <person name="Kudoh Y."/>
            <person name="Yamazaki J."/>
            <person name="Kushida N."/>
            <person name="Oguchi A."/>
            <person name="Aoki K."/>
            <person name="Kubota K."/>
            <person name="Nakamura Y."/>
            <person name="Nomura N."/>
            <person name="Sako Y."/>
            <person name="Kikuchi H."/>
        </authorList>
    </citation>
    <scope>NUCLEOTIDE SEQUENCE [LARGE SCALE GENOMIC DNA]</scope>
    <source>
        <strain>ATCC 700893 / DSM 11879 / JCM 9820 / NBRC 100138 / K1</strain>
    </source>
</reference>
<proteinExistence type="inferred from homology"/>
<feature type="chain" id="PRO_0000122620" description="Probable aminomethyltransferase">
    <location>
        <begin position="1"/>
        <end position="375"/>
    </location>
</feature>
<protein>
    <recommendedName>
        <fullName evidence="1">Probable aminomethyltransferase</fullName>
        <ecNumber evidence="1">2.1.2.10</ecNumber>
    </recommendedName>
    <alternativeName>
        <fullName evidence="1">Glycine cleavage system T protein</fullName>
    </alternativeName>
</protein>
<name>GCST_AERPE</name>
<gene>
    <name evidence="1" type="primary">gcvT</name>
    <name type="ordered locus">APE_1695.1</name>
</gene>
<sequence>MPVRRHILEDLHRSLGATFGEFAGWSVPMSYEGTLKEHMAVRREAGIFDISHMGRMIVSGEGATELLERIYTKRVSKTKVGFMSGPTLALNEYARVKDDEMPYRLGEEEWLIVPNAAVADAMLEYFSSIASSMGLNVSIRDLRERYALLALQGPGAARVMEEMGGGDLLDLKPLQFRENAGIAGVTAYIVSRSGWTGEDGFEIIAEVEAAKRIFKAAVEAGAKPAGIAARDTLRIEAGFVLGGHEYGEDPLRWPCAVSLRYGLGAIDWGKKGFVGEAALRACRREGVRWIRVGLVMKKKYARMIPRSGYRLYVDDVDVGWVTSGTFSPVIGRGVAQAYIDSRYAYIGDTIEVDVRGKRGEARLQEFPLVPLGSRG</sequence>
<accession>Q9YBA2</accession>